<proteinExistence type="inferred from homology"/>
<reference key="1">
    <citation type="journal article" date="2010" name="PLoS Genet.">
        <title>Genome sequence of the plant growth promoting endophytic bacterium Enterobacter sp. 638.</title>
        <authorList>
            <person name="Taghavi S."/>
            <person name="van der Lelie D."/>
            <person name="Hoffman A."/>
            <person name="Zhang Y.B."/>
            <person name="Walla M.D."/>
            <person name="Vangronsveld J."/>
            <person name="Newman L."/>
            <person name="Monchy S."/>
        </authorList>
    </citation>
    <scope>NUCLEOTIDE SEQUENCE [LARGE SCALE GENOMIC DNA]</scope>
    <source>
        <strain>638</strain>
    </source>
</reference>
<keyword id="KW-0997">Cell inner membrane</keyword>
<keyword id="KW-1003">Cell membrane</keyword>
<keyword id="KW-0472">Membrane</keyword>
<keyword id="KW-0812">Transmembrane</keyword>
<keyword id="KW-1133">Transmembrane helix</keyword>
<keyword id="KW-0813">Transport</keyword>
<evidence type="ECO:0000250" key="1"/>
<evidence type="ECO:0000255" key="2"/>
<evidence type="ECO:0000305" key="3"/>
<accession>A4WER2</accession>
<sequence length="327" mass="34480">MKLNWETTLLILLVLEILLFGAINPRMLDINMLLFSTSDFICIGIVALPLTLVIISGGIDISLGSTIGLCAIALGVMMQFGLPMYLAVPLTLLLGLLCGLFNAALIHYTGISPLVITLGTLYLYGGGALLLSGLAGATGYEGIGGFPDSFTAFANLTVLGLPIPLVLFAVITFFFWLITHRGRFGRHLFLIGQNPRAARYAALSVNGMPYALYGLVGVASAIAALVMVSYFGSARSDLGRDLLMPALTAAVLGGANIYGGSGSVIGTALAALLVGYLQQGLQMVGIPNQVSSALSGALLVVVVMGRSLSLHREWVRNFFTKHTRSLR</sequence>
<comment type="function">
    <text evidence="1">Part of the ABC transporter complex LsrABCD involved in autoinducer 2 (AI-2) import. Probably responsible for the translocation of the substrate across the membrane (By similarity).</text>
</comment>
<comment type="subunit">
    <text evidence="1">The complex is composed of two ATP-binding proteins (LsrA), two transmembrane proteins (LsrC and LsrD) and a solute-binding protein (LsrB).</text>
</comment>
<comment type="subcellular location">
    <subcellularLocation>
        <location evidence="1">Cell inner membrane</location>
        <topology evidence="1">Multi-pass membrane protein</topology>
    </subcellularLocation>
</comment>
<comment type="similarity">
    <text evidence="3">Belongs to the binding-protein-dependent transport system permease family. AraH/RbsC subfamily.</text>
</comment>
<organism>
    <name type="scientific">Enterobacter sp. (strain 638)</name>
    <dbReference type="NCBI Taxonomy" id="399742"/>
    <lineage>
        <taxon>Bacteria</taxon>
        <taxon>Pseudomonadati</taxon>
        <taxon>Pseudomonadota</taxon>
        <taxon>Gammaproteobacteria</taxon>
        <taxon>Enterobacterales</taxon>
        <taxon>Enterobacteriaceae</taxon>
        <taxon>Enterobacter</taxon>
    </lineage>
</organism>
<feature type="chain" id="PRO_0000351363" description="Autoinducer 2 import system permease protein LsrD">
    <location>
        <begin position="1"/>
        <end position="327"/>
    </location>
</feature>
<feature type="transmembrane region" description="Helical" evidence="2">
    <location>
        <begin position="3"/>
        <end position="23"/>
    </location>
</feature>
<feature type="transmembrane region" description="Helical" evidence="2">
    <location>
        <begin position="41"/>
        <end position="61"/>
    </location>
</feature>
<feature type="transmembrane region" description="Helical" evidence="2">
    <location>
        <begin position="63"/>
        <end position="83"/>
    </location>
</feature>
<feature type="transmembrane region" description="Helical" evidence="2">
    <location>
        <begin position="86"/>
        <end position="106"/>
    </location>
</feature>
<feature type="transmembrane region" description="Helical" evidence="2">
    <location>
        <begin position="114"/>
        <end position="134"/>
    </location>
</feature>
<feature type="transmembrane region" description="Helical" evidence="2">
    <location>
        <begin position="158"/>
        <end position="178"/>
    </location>
</feature>
<feature type="transmembrane region" description="Helical" evidence="2">
    <location>
        <begin position="211"/>
        <end position="231"/>
    </location>
</feature>
<feature type="transmembrane region" description="Helical" evidence="2">
    <location>
        <begin position="257"/>
        <end position="277"/>
    </location>
</feature>
<feature type="transmembrane region" description="Helical" evidence="2">
    <location>
        <begin position="283"/>
        <end position="303"/>
    </location>
</feature>
<gene>
    <name type="primary">lsrD</name>
    <name type="ordered locus">Ent638_3534</name>
</gene>
<dbReference type="EMBL" id="CP000653">
    <property type="protein sequence ID" value="ABP62192.1"/>
    <property type="molecule type" value="Genomic_DNA"/>
</dbReference>
<dbReference type="RefSeq" id="WP_015960518.1">
    <property type="nucleotide sequence ID" value="NC_009436.1"/>
</dbReference>
<dbReference type="STRING" id="399742.Ent638_3534"/>
<dbReference type="KEGG" id="ent:Ent638_3534"/>
<dbReference type="eggNOG" id="COG1172">
    <property type="taxonomic scope" value="Bacteria"/>
</dbReference>
<dbReference type="HOGENOM" id="CLU_028880_0_0_6"/>
<dbReference type="OrthoDB" id="192433at2"/>
<dbReference type="Proteomes" id="UP000000230">
    <property type="component" value="Chromosome"/>
</dbReference>
<dbReference type="GO" id="GO:0005886">
    <property type="term" value="C:plasma membrane"/>
    <property type="evidence" value="ECO:0007669"/>
    <property type="project" value="UniProtKB-SubCell"/>
</dbReference>
<dbReference type="GO" id="GO:0022857">
    <property type="term" value="F:transmembrane transporter activity"/>
    <property type="evidence" value="ECO:0007669"/>
    <property type="project" value="InterPro"/>
</dbReference>
<dbReference type="CDD" id="cd06579">
    <property type="entry name" value="TM_PBP1_transp_AraH_like"/>
    <property type="match status" value="1"/>
</dbReference>
<dbReference type="InterPro" id="IPR001851">
    <property type="entry name" value="ABC_transp_permease"/>
</dbReference>
<dbReference type="NCBIfam" id="NF011612">
    <property type="entry name" value="PRK15038.1"/>
    <property type="match status" value="1"/>
</dbReference>
<dbReference type="PANTHER" id="PTHR32196">
    <property type="entry name" value="ABC TRANSPORTER PERMEASE PROTEIN YPHD-RELATED-RELATED"/>
    <property type="match status" value="1"/>
</dbReference>
<dbReference type="PANTHER" id="PTHR32196:SF71">
    <property type="entry name" value="AUTOINDUCER 2 IMPORT SYSTEM PERMEASE PROTEIN LSRD"/>
    <property type="match status" value="1"/>
</dbReference>
<dbReference type="Pfam" id="PF02653">
    <property type="entry name" value="BPD_transp_2"/>
    <property type="match status" value="1"/>
</dbReference>
<protein>
    <recommendedName>
        <fullName>Autoinducer 2 import system permease protein LsrD</fullName>
        <shortName>AI-2 import system permease protein LsrD</shortName>
    </recommendedName>
</protein>
<name>LSRD_ENT38</name>